<organism>
    <name type="scientific">Caulobacter vibrioides (strain ATCC 19089 / CIP 103742 / CB 15)</name>
    <name type="common">Caulobacter crescentus</name>
    <dbReference type="NCBI Taxonomy" id="190650"/>
    <lineage>
        <taxon>Bacteria</taxon>
        <taxon>Pseudomonadati</taxon>
        <taxon>Pseudomonadota</taxon>
        <taxon>Alphaproteobacteria</taxon>
        <taxon>Caulobacterales</taxon>
        <taxon>Caulobacteraceae</taxon>
        <taxon>Caulobacter</taxon>
    </lineage>
</organism>
<gene>
    <name type="primary">hfaD</name>
    <name type="ordered locus">CC_2630</name>
</gene>
<keyword id="KW-0130">Cell adhesion</keyword>
<keyword id="KW-0998">Cell outer membrane</keyword>
<keyword id="KW-0472">Membrane</keyword>
<keyword id="KW-1185">Reference proteome</keyword>
<sequence length="303" mass="29726">MGEIFSEQSLNVQTVSDGVTASTTAQANGVSVGVTNADAAVTSNQDNQGVVYGHSVVDVAASAGASSAVRTTAVGNAAALSASNGTISAFAVQTNSAGVTARGQVEAATAEAADLTVSTLAMGNSAGVTLDNGSAGARISQSTTANVLADGGAIVGYVSGTSAVTATTAGNNINVTGANQSAVRAITDQANTADVTQASKFTAYGNSYMTATAATATGNNLAVSNDGPLADVAAHQWNTSYVRGQAEGTSYLFGAAQTTAYAAGNSARSTMSGPKSCSTTFRPIRAAASRRPPASAGTRAMTR</sequence>
<feature type="chain" id="PRO_0000083958" description="Holdfast attachment protein D">
    <location>
        <begin position="1"/>
        <end position="303"/>
    </location>
</feature>
<feature type="region of interest" description="Disordered" evidence="1">
    <location>
        <begin position="266"/>
        <end position="303"/>
    </location>
</feature>
<feature type="compositionally biased region" description="Polar residues" evidence="1">
    <location>
        <begin position="266"/>
        <end position="281"/>
    </location>
</feature>
<feature type="compositionally biased region" description="Low complexity" evidence="1">
    <location>
        <begin position="282"/>
        <end position="303"/>
    </location>
</feature>
<feature type="sequence conflict" description="In Ref. 2; AE005673." evidence="2" ref="2">
    <original>G</original>
    <variation>S</variation>
    <location>
        <position position="18"/>
    </location>
</feature>
<feature type="sequence conflict" description="In Ref. 2." evidence="2" ref="2">
    <original>G</original>
    <variation>A</variation>
    <location>
        <position position="273"/>
    </location>
</feature>
<evidence type="ECO:0000256" key="1">
    <source>
        <dbReference type="SAM" id="MobiDB-lite"/>
    </source>
</evidence>
<evidence type="ECO:0000305" key="2"/>
<reference key="1">
    <citation type="journal article" date="1994" name="FEMS Microbiol. Lett.">
        <title>The Caulobacter crescentus holdfast: identification of holdfast attachment complex genes.</title>
        <authorList>
            <person name="Kurtz H.D. Jr."/>
            <person name="Smit J."/>
        </authorList>
    </citation>
    <scope>NUCLEOTIDE SEQUENCE [GENOMIC DNA]</scope>
    <source>
        <strain>CB2A</strain>
    </source>
</reference>
<reference key="2">
    <citation type="journal article" date="2001" name="Proc. Natl. Acad. Sci. U.S.A.">
        <title>Complete genome sequence of Caulobacter crescentus.</title>
        <authorList>
            <person name="Nierman W.C."/>
            <person name="Feldblyum T.V."/>
            <person name="Laub M.T."/>
            <person name="Paulsen I.T."/>
            <person name="Nelson K.E."/>
            <person name="Eisen J.A."/>
            <person name="Heidelberg J.F."/>
            <person name="Alley M.R.K."/>
            <person name="Ohta N."/>
            <person name="Maddock J.R."/>
            <person name="Potocka I."/>
            <person name="Nelson W.C."/>
            <person name="Newton A."/>
            <person name="Stephens C."/>
            <person name="Phadke N.D."/>
            <person name="Ely B."/>
            <person name="DeBoy R.T."/>
            <person name="Dodson R.J."/>
            <person name="Durkin A.S."/>
            <person name="Gwinn M.L."/>
            <person name="Haft D.H."/>
            <person name="Kolonay J.F."/>
            <person name="Smit J."/>
            <person name="Craven M.B."/>
            <person name="Khouri H.M."/>
            <person name="Shetty J."/>
            <person name="Berry K.J."/>
            <person name="Utterback T.R."/>
            <person name="Tran K."/>
            <person name="Wolf A.M."/>
            <person name="Vamathevan J.J."/>
            <person name="Ermolaeva M.D."/>
            <person name="White O."/>
            <person name="Salzberg S.L."/>
            <person name="Venter J.C."/>
            <person name="Shapiro L."/>
            <person name="Fraser C.M."/>
        </authorList>
    </citation>
    <scope>NUCLEOTIDE SEQUENCE [LARGE SCALE GENOMIC DNA]</scope>
    <source>
        <strain>ATCC 19089 / CIP 103742 / CB 15</strain>
    </source>
</reference>
<accession>Q45977</accession>
<comment type="function">
    <text>Involved in attachment of the holdfast to the cell. The holdfast is a structure that allows the bacteria to firmly adhere to surfaces.</text>
</comment>
<comment type="subcellular location">
    <subcellularLocation>
        <location evidence="2">Cell outer membrane</location>
        <topology evidence="2">Peripheral membrane protein</topology>
    </subcellularLocation>
</comment>
<comment type="sequence caution" evidence="2">
    <conflict type="erroneous initiation">
        <sequence resource="EMBL-CDS" id="AAA18637"/>
    </conflict>
</comment>
<comment type="sequence caution" evidence="2">
    <conflict type="frameshift">
        <sequence resource="EMBL" id="AE005673"/>
    </conflict>
</comment>
<protein>
    <recommendedName>
        <fullName>Holdfast attachment protein D</fullName>
        <shortName>Protein HfaD</shortName>
    </recommendedName>
</protein>
<name>HFAD_CAUVC</name>
<dbReference type="EMBL" id="U01165">
    <property type="protein sequence ID" value="AAA18637.1"/>
    <property type="status" value="ALT_INIT"/>
    <property type="molecule type" value="Genomic_DNA"/>
</dbReference>
<dbReference type="EMBL" id="AE005673">
    <property type="status" value="NOT_ANNOTATED_CDS"/>
    <property type="molecule type" value="Genomic_DNA"/>
</dbReference>
<dbReference type="Proteomes" id="UP000001816">
    <property type="component" value="Chromosome"/>
</dbReference>
<dbReference type="GO" id="GO:0009279">
    <property type="term" value="C:cell outer membrane"/>
    <property type="evidence" value="ECO:0007669"/>
    <property type="project" value="UniProtKB-SubCell"/>
</dbReference>
<dbReference type="GO" id="GO:0007155">
    <property type="term" value="P:cell adhesion"/>
    <property type="evidence" value="ECO:0007669"/>
    <property type="project" value="UniProtKB-KW"/>
</dbReference>
<dbReference type="InterPro" id="IPR049860">
    <property type="entry name" value="Holdfast_HfaD"/>
</dbReference>
<dbReference type="NCBIfam" id="NF037936">
    <property type="entry name" value="holdfast_HfaD"/>
    <property type="match status" value="1"/>
</dbReference>
<proteinExistence type="predicted"/>